<sequence>MKHRIQHIHFVGVGGSGMSGIAEVLLNLGYTISGSDLNESAVTRRLAELGMRIAIGHDRANVAGAGAIVTSTAVAGDNPEVLAARAARIPVVPRAVMLAELMRLKRGIAVAGTHGKTTTTSLVASVLAAGGLDPTFVIGGRLTSAGANARLGQGEYIVVEADESDASFLNLLPVMAIVTNIDADHMDTYGHDVARLKSAFIEFTQRLPFYGSAILCADDANVREIMPFVSRPITTYGLSPDAQVCAQDVQADGTRMRFTVQRRDRDVVLPALQVELNLPGLHNVRNALAAIAVATELGVDDAAIREALAAFKGVGRRFTQWGDLPVPAAHGGGTFTLVDDYGHHPVEMAATLAAARGAWPQRRIVLAFQPHRYTRTRDCFEDFVRVLGSADGVLLTEVYAAGEAPLVAADGRALSRALRVAGKVEPVFVEDVGELPQAILDFVRDGDVVVVMGAGSISKTPALVGELA</sequence>
<feature type="chain" id="PRO_0000182063" description="UDP-N-acetylmuramate--L-alanine ligase">
    <location>
        <begin position="1"/>
        <end position="468"/>
    </location>
</feature>
<feature type="binding site" evidence="1">
    <location>
        <begin position="112"/>
        <end position="118"/>
    </location>
    <ligand>
        <name>ATP</name>
        <dbReference type="ChEBI" id="CHEBI:30616"/>
    </ligand>
</feature>
<name>MURC_BORPA</name>
<gene>
    <name evidence="1" type="primary">murC</name>
    <name type="ordered locus">BPP3751</name>
</gene>
<comment type="function">
    <text evidence="1">Cell wall formation.</text>
</comment>
<comment type="catalytic activity">
    <reaction evidence="1">
        <text>UDP-N-acetyl-alpha-D-muramate + L-alanine + ATP = UDP-N-acetyl-alpha-D-muramoyl-L-alanine + ADP + phosphate + H(+)</text>
        <dbReference type="Rhea" id="RHEA:23372"/>
        <dbReference type="ChEBI" id="CHEBI:15378"/>
        <dbReference type="ChEBI" id="CHEBI:30616"/>
        <dbReference type="ChEBI" id="CHEBI:43474"/>
        <dbReference type="ChEBI" id="CHEBI:57972"/>
        <dbReference type="ChEBI" id="CHEBI:70757"/>
        <dbReference type="ChEBI" id="CHEBI:83898"/>
        <dbReference type="ChEBI" id="CHEBI:456216"/>
        <dbReference type="EC" id="6.3.2.8"/>
    </reaction>
</comment>
<comment type="pathway">
    <text evidence="1">Cell wall biogenesis; peptidoglycan biosynthesis.</text>
</comment>
<comment type="subcellular location">
    <subcellularLocation>
        <location evidence="1">Cytoplasm</location>
    </subcellularLocation>
</comment>
<comment type="similarity">
    <text evidence="1">Belongs to the MurCDEF family.</text>
</comment>
<accession>Q7W4B5</accession>
<evidence type="ECO:0000255" key="1">
    <source>
        <dbReference type="HAMAP-Rule" id="MF_00046"/>
    </source>
</evidence>
<proteinExistence type="inferred from homology"/>
<reference key="1">
    <citation type="journal article" date="2003" name="Nat. Genet.">
        <title>Comparative analysis of the genome sequences of Bordetella pertussis, Bordetella parapertussis and Bordetella bronchiseptica.</title>
        <authorList>
            <person name="Parkhill J."/>
            <person name="Sebaihia M."/>
            <person name="Preston A."/>
            <person name="Murphy L.D."/>
            <person name="Thomson N.R."/>
            <person name="Harris D.E."/>
            <person name="Holden M.T.G."/>
            <person name="Churcher C.M."/>
            <person name="Bentley S.D."/>
            <person name="Mungall K.L."/>
            <person name="Cerdeno-Tarraga A.-M."/>
            <person name="Temple L."/>
            <person name="James K.D."/>
            <person name="Harris B."/>
            <person name="Quail M.A."/>
            <person name="Achtman M."/>
            <person name="Atkin R."/>
            <person name="Baker S."/>
            <person name="Basham D."/>
            <person name="Bason N."/>
            <person name="Cherevach I."/>
            <person name="Chillingworth T."/>
            <person name="Collins M."/>
            <person name="Cronin A."/>
            <person name="Davis P."/>
            <person name="Doggett J."/>
            <person name="Feltwell T."/>
            <person name="Goble A."/>
            <person name="Hamlin N."/>
            <person name="Hauser H."/>
            <person name="Holroyd S."/>
            <person name="Jagels K."/>
            <person name="Leather S."/>
            <person name="Moule S."/>
            <person name="Norberczak H."/>
            <person name="O'Neil S."/>
            <person name="Ormond D."/>
            <person name="Price C."/>
            <person name="Rabbinowitsch E."/>
            <person name="Rutter S."/>
            <person name="Sanders M."/>
            <person name="Saunders D."/>
            <person name="Seeger K."/>
            <person name="Sharp S."/>
            <person name="Simmonds M."/>
            <person name="Skelton J."/>
            <person name="Squares R."/>
            <person name="Squares S."/>
            <person name="Stevens K."/>
            <person name="Unwin L."/>
            <person name="Whitehead S."/>
            <person name="Barrell B.G."/>
            <person name="Maskell D.J."/>
        </authorList>
    </citation>
    <scope>NUCLEOTIDE SEQUENCE [LARGE SCALE GENOMIC DNA]</scope>
    <source>
        <strain>12822 / ATCC BAA-587 / NCTC 13253</strain>
    </source>
</reference>
<dbReference type="EC" id="6.3.2.8" evidence="1"/>
<dbReference type="EMBL" id="BX640434">
    <property type="protein sequence ID" value="CAE39034.1"/>
    <property type="molecule type" value="Genomic_DNA"/>
</dbReference>
<dbReference type="RefSeq" id="WP_003814572.1">
    <property type="nucleotide sequence ID" value="NC_002928.3"/>
</dbReference>
<dbReference type="SMR" id="Q7W4B5"/>
<dbReference type="GeneID" id="93205540"/>
<dbReference type="KEGG" id="bpa:BPP3751"/>
<dbReference type="HOGENOM" id="CLU_028104_2_2_4"/>
<dbReference type="UniPathway" id="UPA00219"/>
<dbReference type="Proteomes" id="UP000001421">
    <property type="component" value="Chromosome"/>
</dbReference>
<dbReference type="GO" id="GO:0005737">
    <property type="term" value="C:cytoplasm"/>
    <property type="evidence" value="ECO:0007669"/>
    <property type="project" value="UniProtKB-SubCell"/>
</dbReference>
<dbReference type="GO" id="GO:0005524">
    <property type="term" value="F:ATP binding"/>
    <property type="evidence" value="ECO:0007669"/>
    <property type="project" value="UniProtKB-UniRule"/>
</dbReference>
<dbReference type="GO" id="GO:0008763">
    <property type="term" value="F:UDP-N-acetylmuramate-L-alanine ligase activity"/>
    <property type="evidence" value="ECO:0007669"/>
    <property type="project" value="UniProtKB-UniRule"/>
</dbReference>
<dbReference type="GO" id="GO:0051301">
    <property type="term" value="P:cell division"/>
    <property type="evidence" value="ECO:0007669"/>
    <property type="project" value="UniProtKB-KW"/>
</dbReference>
<dbReference type="GO" id="GO:0071555">
    <property type="term" value="P:cell wall organization"/>
    <property type="evidence" value="ECO:0007669"/>
    <property type="project" value="UniProtKB-KW"/>
</dbReference>
<dbReference type="GO" id="GO:0009252">
    <property type="term" value="P:peptidoglycan biosynthetic process"/>
    <property type="evidence" value="ECO:0007669"/>
    <property type="project" value="UniProtKB-UniRule"/>
</dbReference>
<dbReference type="GO" id="GO:0008360">
    <property type="term" value="P:regulation of cell shape"/>
    <property type="evidence" value="ECO:0007669"/>
    <property type="project" value="UniProtKB-KW"/>
</dbReference>
<dbReference type="FunFam" id="3.40.1190.10:FF:000001">
    <property type="entry name" value="UDP-N-acetylmuramate--L-alanine ligase"/>
    <property type="match status" value="1"/>
</dbReference>
<dbReference type="Gene3D" id="3.90.190.20">
    <property type="entry name" value="Mur ligase, C-terminal domain"/>
    <property type="match status" value="1"/>
</dbReference>
<dbReference type="Gene3D" id="3.40.1190.10">
    <property type="entry name" value="Mur-like, catalytic domain"/>
    <property type="match status" value="1"/>
</dbReference>
<dbReference type="Gene3D" id="3.40.50.720">
    <property type="entry name" value="NAD(P)-binding Rossmann-like Domain"/>
    <property type="match status" value="1"/>
</dbReference>
<dbReference type="HAMAP" id="MF_00046">
    <property type="entry name" value="MurC"/>
    <property type="match status" value="1"/>
</dbReference>
<dbReference type="InterPro" id="IPR036565">
    <property type="entry name" value="Mur-like_cat_sf"/>
</dbReference>
<dbReference type="InterPro" id="IPR004101">
    <property type="entry name" value="Mur_ligase_C"/>
</dbReference>
<dbReference type="InterPro" id="IPR036615">
    <property type="entry name" value="Mur_ligase_C_dom_sf"/>
</dbReference>
<dbReference type="InterPro" id="IPR013221">
    <property type="entry name" value="Mur_ligase_cen"/>
</dbReference>
<dbReference type="InterPro" id="IPR000713">
    <property type="entry name" value="Mur_ligase_N"/>
</dbReference>
<dbReference type="InterPro" id="IPR050061">
    <property type="entry name" value="MurCDEF_pg_biosynth"/>
</dbReference>
<dbReference type="InterPro" id="IPR005758">
    <property type="entry name" value="UDP-N-AcMur_Ala_ligase_MurC"/>
</dbReference>
<dbReference type="NCBIfam" id="TIGR01082">
    <property type="entry name" value="murC"/>
    <property type="match status" value="1"/>
</dbReference>
<dbReference type="PANTHER" id="PTHR43445:SF3">
    <property type="entry name" value="UDP-N-ACETYLMURAMATE--L-ALANINE LIGASE"/>
    <property type="match status" value="1"/>
</dbReference>
<dbReference type="PANTHER" id="PTHR43445">
    <property type="entry name" value="UDP-N-ACETYLMURAMATE--L-ALANINE LIGASE-RELATED"/>
    <property type="match status" value="1"/>
</dbReference>
<dbReference type="Pfam" id="PF01225">
    <property type="entry name" value="Mur_ligase"/>
    <property type="match status" value="1"/>
</dbReference>
<dbReference type="Pfam" id="PF02875">
    <property type="entry name" value="Mur_ligase_C"/>
    <property type="match status" value="1"/>
</dbReference>
<dbReference type="Pfam" id="PF08245">
    <property type="entry name" value="Mur_ligase_M"/>
    <property type="match status" value="1"/>
</dbReference>
<dbReference type="SUPFAM" id="SSF51984">
    <property type="entry name" value="MurCD N-terminal domain"/>
    <property type="match status" value="1"/>
</dbReference>
<dbReference type="SUPFAM" id="SSF53623">
    <property type="entry name" value="MurD-like peptide ligases, catalytic domain"/>
    <property type="match status" value="1"/>
</dbReference>
<dbReference type="SUPFAM" id="SSF53244">
    <property type="entry name" value="MurD-like peptide ligases, peptide-binding domain"/>
    <property type="match status" value="1"/>
</dbReference>
<organism>
    <name type="scientific">Bordetella parapertussis (strain 12822 / ATCC BAA-587 / NCTC 13253)</name>
    <dbReference type="NCBI Taxonomy" id="257311"/>
    <lineage>
        <taxon>Bacteria</taxon>
        <taxon>Pseudomonadati</taxon>
        <taxon>Pseudomonadota</taxon>
        <taxon>Betaproteobacteria</taxon>
        <taxon>Burkholderiales</taxon>
        <taxon>Alcaligenaceae</taxon>
        <taxon>Bordetella</taxon>
    </lineage>
</organism>
<protein>
    <recommendedName>
        <fullName evidence="1">UDP-N-acetylmuramate--L-alanine ligase</fullName>
        <ecNumber evidence="1">6.3.2.8</ecNumber>
    </recommendedName>
    <alternativeName>
        <fullName evidence="1">UDP-N-acetylmuramoyl-L-alanine synthetase</fullName>
    </alternativeName>
</protein>
<keyword id="KW-0067">ATP-binding</keyword>
<keyword id="KW-0131">Cell cycle</keyword>
<keyword id="KW-0132">Cell division</keyword>
<keyword id="KW-0133">Cell shape</keyword>
<keyword id="KW-0961">Cell wall biogenesis/degradation</keyword>
<keyword id="KW-0963">Cytoplasm</keyword>
<keyword id="KW-0436">Ligase</keyword>
<keyword id="KW-0547">Nucleotide-binding</keyword>
<keyword id="KW-0573">Peptidoglycan synthesis</keyword>